<comment type="function">
    <text evidence="1">This is one of the proteins that bind and probably mediate the attachment of the 5S RNA into the large ribosomal subunit, where it forms part of the central protuberance.</text>
</comment>
<comment type="subunit">
    <text evidence="1">Part of the 50S ribosomal subunit; part of the 5S rRNA/L5/L18/L25 subcomplex. Contacts the 5S and 23S rRNAs.</text>
</comment>
<comment type="similarity">
    <text evidence="1">Belongs to the universal ribosomal protein uL18 family.</text>
</comment>
<dbReference type="EMBL" id="AP010918">
    <property type="protein sequence ID" value="BAH25033.1"/>
    <property type="molecule type" value="Genomic_DNA"/>
</dbReference>
<dbReference type="RefSeq" id="WP_003403677.1">
    <property type="nucleotide sequence ID" value="NZ_CP014566.1"/>
</dbReference>
<dbReference type="SMR" id="C1AL54"/>
<dbReference type="GeneID" id="45424685"/>
<dbReference type="KEGG" id="mbt:JTY_0740"/>
<dbReference type="HOGENOM" id="CLU_098841_0_1_11"/>
<dbReference type="GO" id="GO:0022625">
    <property type="term" value="C:cytosolic large ribosomal subunit"/>
    <property type="evidence" value="ECO:0007669"/>
    <property type="project" value="TreeGrafter"/>
</dbReference>
<dbReference type="GO" id="GO:0008097">
    <property type="term" value="F:5S rRNA binding"/>
    <property type="evidence" value="ECO:0007669"/>
    <property type="project" value="TreeGrafter"/>
</dbReference>
<dbReference type="GO" id="GO:0003735">
    <property type="term" value="F:structural constituent of ribosome"/>
    <property type="evidence" value="ECO:0007669"/>
    <property type="project" value="InterPro"/>
</dbReference>
<dbReference type="GO" id="GO:0006412">
    <property type="term" value="P:translation"/>
    <property type="evidence" value="ECO:0007669"/>
    <property type="project" value="UniProtKB-UniRule"/>
</dbReference>
<dbReference type="CDD" id="cd00432">
    <property type="entry name" value="Ribosomal_L18_L5e"/>
    <property type="match status" value="1"/>
</dbReference>
<dbReference type="FunFam" id="3.30.420.100:FF:000001">
    <property type="entry name" value="50S ribosomal protein L18"/>
    <property type="match status" value="1"/>
</dbReference>
<dbReference type="Gene3D" id="3.30.420.100">
    <property type="match status" value="1"/>
</dbReference>
<dbReference type="HAMAP" id="MF_01337_B">
    <property type="entry name" value="Ribosomal_uL18_B"/>
    <property type="match status" value="1"/>
</dbReference>
<dbReference type="InterPro" id="IPR004389">
    <property type="entry name" value="Ribosomal_uL18_bac-type"/>
</dbReference>
<dbReference type="InterPro" id="IPR005484">
    <property type="entry name" value="Ribosomal_uL18_bac/euk"/>
</dbReference>
<dbReference type="NCBIfam" id="TIGR00060">
    <property type="entry name" value="L18_bact"/>
    <property type="match status" value="1"/>
</dbReference>
<dbReference type="PANTHER" id="PTHR12899">
    <property type="entry name" value="39S RIBOSOMAL PROTEIN L18, MITOCHONDRIAL"/>
    <property type="match status" value="1"/>
</dbReference>
<dbReference type="PANTHER" id="PTHR12899:SF3">
    <property type="entry name" value="LARGE RIBOSOMAL SUBUNIT PROTEIN UL18M"/>
    <property type="match status" value="1"/>
</dbReference>
<dbReference type="Pfam" id="PF00861">
    <property type="entry name" value="Ribosomal_L18p"/>
    <property type="match status" value="1"/>
</dbReference>
<dbReference type="SUPFAM" id="SSF53137">
    <property type="entry name" value="Translational machinery components"/>
    <property type="match status" value="1"/>
</dbReference>
<proteinExistence type="inferred from homology"/>
<organism>
    <name type="scientific">Mycobacterium bovis (strain BCG / Tokyo 172 / ATCC 35737 / TMC 1019)</name>
    <dbReference type="NCBI Taxonomy" id="561275"/>
    <lineage>
        <taxon>Bacteria</taxon>
        <taxon>Bacillati</taxon>
        <taxon>Actinomycetota</taxon>
        <taxon>Actinomycetes</taxon>
        <taxon>Mycobacteriales</taxon>
        <taxon>Mycobacteriaceae</taxon>
        <taxon>Mycobacterium</taxon>
        <taxon>Mycobacterium tuberculosis complex</taxon>
    </lineage>
</organism>
<evidence type="ECO:0000255" key="1">
    <source>
        <dbReference type="HAMAP-Rule" id="MF_01337"/>
    </source>
</evidence>
<evidence type="ECO:0000305" key="2"/>
<accession>C1AL54</accession>
<keyword id="KW-0687">Ribonucleoprotein</keyword>
<keyword id="KW-0689">Ribosomal protein</keyword>
<keyword id="KW-0694">RNA-binding</keyword>
<keyword id="KW-0699">rRNA-binding</keyword>
<protein>
    <recommendedName>
        <fullName evidence="1">Large ribosomal subunit protein uL18</fullName>
    </recommendedName>
    <alternativeName>
        <fullName evidence="2">50S ribosomal protein L18</fullName>
    </alternativeName>
</protein>
<gene>
    <name evidence="1" type="primary">rplR</name>
    <name type="ordered locus">JTY_0740</name>
</gene>
<reference key="1">
    <citation type="journal article" date="2009" name="Vaccine">
        <title>Whole genome sequence analysis of Mycobacterium bovis bacillus Calmette-Guerin (BCG) Tokyo 172: a comparative study of BCG vaccine substrains.</title>
        <authorList>
            <person name="Seki M."/>
            <person name="Honda I."/>
            <person name="Fujita I."/>
            <person name="Yano I."/>
            <person name="Yamamoto S."/>
            <person name="Koyama A."/>
        </authorList>
    </citation>
    <scope>NUCLEOTIDE SEQUENCE [LARGE SCALE GENOMIC DNA]</scope>
    <source>
        <strain>BCG / Tokyo 172 / ATCC 35737 / TMC 1019</strain>
    </source>
</reference>
<sequence>MAQSVSATRRISRLRRHTRLRKKLSGTAERPRLVVHRSARHIHVQLVNDLNGTTVAAASSIEADVRGVPGDKKARSVRVGQLIAERAKAAGIDTVVFDRGGYTYGGRIAALADAARENGLSF</sequence>
<name>RL18_MYCBT</name>
<feature type="chain" id="PRO_1000166242" description="Large ribosomal subunit protein uL18">
    <location>
        <begin position="1"/>
        <end position="122"/>
    </location>
</feature>